<protein>
    <recommendedName>
        <fullName>Penaeidin-3n</fullName>
        <shortName>Pen-3n</shortName>
    </recommendedName>
</protein>
<feature type="signal peptide" evidence="2">
    <location>
        <begin position="1"/>
        <end position="19"/>
    </location>
</feature>
<feature type="chain" id="PRO_0000023519" description="Penaeidin-3n">
    <location>
        <begin position="20"/>
        <end position="74"/>
    </location>
</feature>
<feature type="modified residue" description="Pyrrolidone carboxylic acid" evidence="1">
    <location>
        <position position="20"/>
    </location>
</feature>
<feature type="modified residue" description="Serine amide" evidence="1">
    <location>
        <position position="74"/>
    </location>
</feature>
<feature type="disulfide bond" evidence="1">
    <location>
        <begin position="44"/>
        <end position="59"/>
    </location>
</feature>
<feature type="disulfide bond" evidence="1">
    <location>
        <begin position="48"/>
        <end position="66"/>
    </location>
</feature>
<proteinExistence type="inferred from homology"/>
<organism>
    <name type="scientific">Penaeus setiferus</name>
    <name type="common">Atlantic white shrimp</name>
    <name type="synonym">Litopenaeus setiferus</name>
    <dbReference type="NCBI Taxonomy" id="64468"/>
    <lineage>
        <taxon>Eukaryota</taxon>
        <taxon>Metazoa</taxon>
        <taxon>Ecdysozoa</taxon>
        <taxon>Arthropoda</taxon>
        <taxon>Crustacea</taxon>
        <taxon>Multicrustacea</taxon>
        <taxon>Malacostraca</taxon>
        <taxon>Eumalacostraca</taxon>
        <taxon>Eucarida</taxon>
        <taxon>Decapoda</taxon>
        <taxon>Dendrobranchiata</taxon>
        <taxon>Penaeoidea</taxon>
        <taxon>Penaeidae</taxon>
        <taxon>Penaeus</taxon>
    </lineage>
</organism>
<accession>Q962B0</accession>
<comment type="function">
    <text evidence="1">Antibacterial and antifungal activity. Presents chitin-binding activity (By similarity).</text>
</comment>
<comment type="subcellular location">
    <subcellularLocation>
        <location>Cytoplasmic granule</location>
    </subcellularLocation>
    <text>Cytoplasmic granules of hemocytes and to a lesser extent in small granules of hemocytes.</text>
</comment>
<comment type="similarity">
    <text evidence="3">Belongs to the penaeidin family.</text>
</comment>
<evidence type="ECO:0000250" key="1"/>
<evidence type="ECO:0000255" key="2"/>
<evidence type="ECO:0000305" key="3"/>
<keyword id="KW-0027">Amidation</keyword>
<keyword id="KW-0044">Antibiotic</keyword>
<keyword id="KW-0929">Antimicrobial</keyword>
<keyword id="KW-0147">Chitin-binding</keyword>
<keyword id="KW-1015">Disulfide bond</keyword>
<keyword id="KW-0295">Fungicide</keyword>
<keyword id="KW-0873">Pyrrolidone carboxylic acid</keyword>
<keyword id="KW-0732">Signal</keyword>
<name>PEN3N_PENST</name>
<sequence>MRLVVCLVFLASFALVCQGQGYKGPYTRPILRPYVRPVVSYNACTLSCRGITTTQARSCSTRLGRCCHVAKGYSG</sequence>
<dbReference type="EMBL" id="AY039204">
    <property type="protein sequence ID" value="AAK83452.1"/>
    <property type="molecule type" value="mRNA"/>
</dbReference>
<dbReference type="SMR" id="Q962B0"/>
<dbReference type="GO" id="GO:0005737">
    <property type="term" value="C:cytoplasm"/>
    <property type="evidence" value="ECO:0007669"/>
    <property type="project" value="InterPro"/>
</dbReference>
<dbReference type="GO" id="GO:0008061">
    <property type="term" value="F:chitin binding"/>
    <property type="evidence" value="ECO:0007669"/>
    <property type="project" value="UniProtKB-KW"/>
</dbReference>
<dbReference type="GO" id="GO:0042742">
    <property type="term" value="P:defense response to bacterium"/>
    <property type="evidence" value="ECO:0007669"/>
    <property type="project" value="UniProtKB-KW"/>
</dbReference>
<dbReference type="GO" id="GO:0050832">
    <property type="term" value="P:defense response to fungus"/>
    <property type="evidence" value="ECO:0007669"/>
    <property type="project" value="UniProtKB-KW"/>
</dbReference>
<dbReference type="GO" id="GO:0031640">
    <property type="term" value="P:killing of cells of another organism"/>
    <property type="evidence" value="ECO:0007669"/>
    <property type="project" value="UniProtKB-KW"/>
</dbReference>
<dbReference type="InterPro" id="IPR009226">
    <property type="entry name" value="Penaeidin"/>
</dbReference>
<dbReference type="Pfam" id="PF05927">
    <property type="entry name" value="Penaeidin"/>
    <property type="match status" value="1"/>
</dbReference>
<reference key="1">
    <citation type="journal article" date="2002" name="Immunogenetics">
        <title>Diversity of the penaeidin antimicrobial peptides in two shrimp species.</title>
        <authorList>
            <person name="Cuthbertson B.J."/>
            <person name="Shepard E.F."/>
            <person name="Chapman R.W."/>
            <person name="Gross P.S."/>
        </authorList>
    </citation>
    <scope>NUCLEOTIDE SEQUENCE [MRNA]</scope>
    <source>
        <tissue>Hemocyte</tissue>
    </source>
</reference>